<evidence type="ECO:0000250" key="1">
    <source>
        <dbReference type="UniProtKB" id="P03901"/>
    </source>
</evidence>
<evidence type="ECO:0000250" key="2">
    <source>
        <dbReference type="UniProtKB" id="P03902"/>
    </source>
</evidence>
<evidence type="ECO:0000255" key="3"/>
<evidence type="ECO:0000305" key="4"/>
<feature type="chain" id="PRO_0000274984" description="NADH-ubiquinone oxidoreductase chain 4L">
    <location>
        <begin position="1"/>
        <end position="98"/>
    </location>
</feature>
<feature type="transmembrane region" description="Helical" evidence="3">
    <location>
        <begin position="1"/>
        <end position="21"/>
    </location>
</feature>
<feature type="transmembrane region" description="Helical" evidence="3">
    <location>
        <begin position="29"/>
        <end position="49"/>
    </location>
</feature>
<feature type="transmembrane region" description="Helical" evidence="3">
    <location>
        <begin position="61"/>
        <end position="81"/>
    </location>
</feature>
<organism>
    <name type="scientific">Callorhinus ursinus</name>
    <name type="common">Northern fur seal</name>
    <dbReference type="NCBI Taxonomy" id="34884"/>
    <lineage>
        <taxon>Eukaryota</taxon>
        <taxon>Metazoa</taxon>
        <taxon>Chordata</taxon>
        <taxon>Craniata</taxon>
        <taxon>Vertebrata</taxon>
        <taxon>Euteleostomi</taxon>
        <taxon>Mammalia</taxon>
        <taxon>Eutheria</taxon>
        <taxon>Laurasiatheria</taxon>
        <taxon>Carnivora</taxon>
        <taxon>Caniformia</taxon>
        <taxon>Pinnipedia</taxon>
        <taxon>Otariidae</taxon>
        <taxon>Callorhinus</taxon>
    </lineage>
</organism>
<accession>Q08HL9</accession>
<gene>
    <name type="primary">MT-ND4L</name>
    <name type="synonym">MTND4L</name>
    <name type="synonym">NADH4L</name>
    <name type="synonym">ND4L</name>
</gene>
<name>NU4LM_CALUR</name>
<dbReference type="EC" id="7.1.1.2"/>
<dbReference type="EMBL" id="AM181016">
    <property type="protein sequence ID" value="CAJ56879.1"/>
    <property type="molecule type" value="Genomic_DNA"/>
</dbReference>
<dbReference type="RefSeq" id="YP_778690.1">
    <property type="nucleotide sequence ID" value="NC_008415.3"/>
</dbReference>
<dbReference type="SMR" id="Q08HL9"/>
<dbReference type="GeneID" id="4356079"/>
<dbReference type="CTD" id="4539"/>
<dbReference type="OrthoDB" id="19063at33554"/>
<dbReference type="Proteomes" id="UP000286641">
    <property type="component" value="Mitochondrion MT"/>
</dbReference>
<dbReference type="GO" id="GO:0005743">
    <property type="term" value="C:mitochondrial inner membrane"/>
    <property type="evidence" value="ECO:0000250"/>
    <property type="project" value="UniProtKB"/>
</dbReference>
<dbReference type="GO" id="GO:0045271">
    <property type="term" value="C:respiratory chain complex I"/>
    <property type="evidence" value="ECO:0000250"/>
    <property type="project" value="UniProtKB"/>
</dbReference>
<dbReference type="GO" id="GO:0008137">
    <property type="term" value="F:NADH dehydrogenase (ubiquinone) activity"/>
    <property type="evidence" value="ECO:0000250"/>
    <property type="project" value="UniProtKB"/>
</dbReference>
<dbReference type="GO" id="GO:0042773">
    <property type="term" value="P:ATP synthesis coupled electron transport"/>
    <property type="evidence" value="ECO:0007669"/>
    <property type="project" value="InterPro"/>
</dbReference>
<dbReference type="FunFam" id="1.10.287.3510:FF:000002">
    <property type="entry name" value="NADH-ubiquinone oxidoreductase chain 4L"/>
    <property type="match status" value="1"/>
</dbReference>
<dbReference type="Gene3D" id="1.10.287.3510">
    <property type="match status" value="1"/>
</dbReference>
<dbReference type="InterPro" id="IPR001133">
    <property type="entry name" value="NADH_UbQ_OxRdtase_chain4L/K"/>
</dbReference>
<dbReference type="InterPro" id="IPR039428">
    <property type="entry name" value="NUOK/Mnh_C1-like"/>
</dbReference>
<dbReference type="PANTHER" id="PTHR11434:SF0">
    <property type="entry name" value="NADH-UBIQUINONE OXIDOREDUCTASE CHAIN 4L"/>
    <property type="match status" value="1"/>
</dbReference>
<dbReference type="PANTHER" id="PTHR11434">
    <property type="entry name" value="NADH-UBIQUINONE OXIDOREDUCTASE SUBUNIT ND4L"/>
    <property type="match status" value="1"/>
</dbReference>
<dbReference type="Pfam" id="PF00420">
    <property type="entry name" value="Oxidored_q2"/>
    <property type="match status" value="1"/>
</dbReference>
<sequence length="98" mass="10852">MSMVYFNIFLAFIVSLVGLLMYRSHLMSSLLCLEGMMLSLFVMMSVTILNNHFTLASMAPIILLVFAACEAALGLSLLVMVSNTYGTDYVQNLNLLQC</sequence>
<keyword id="KW-0249">Electron transport</keyword>
<keyword id="KW-0472">Membrane</keyword>
<keyword id="KW-0496">Mitochondrion</keyword>
<keyword id="KW-0999">Mitochondrion inner membrane</keyword>
<keyword id="KW-0520">NAD</keyword>
<keyword id="KW-1185">Reference proteome</keyword>
<keyword id="KW-0679">Respiratory chain</keyword>
<keyword id="KW-1278">Translocase</keyword>
<keyword id="KW-0812">Transmembrane</keyword>
<keyword id="KW-1133">Transmembrane helix</keyword>
<keyword id="KW-0813">Transport</keyword>
<keyword id="KW-0830">Ubiquinone</keyword>
<proteinExistence type="inferred from homology"/>
<comment type="function">
    <text evidence="1">Core subunit of the mitochondrial membrane respiratory chain NADH dehydrogenase (Complex I) which catalyzes electron transfer from NADH through the respiratory chain, using ubiquinone as an electron acceptor. Part of the enzyme membrane arm which is embedded in the lipid bilayer and involved in proton translocation.</text>
</comment>
<comment type="catalytic activity">
    <reaction evidence="1">
        <text>a ubiquinone + NADH + 5 H(+)(in) = a ubiquinol + NAD(+) + 4 H(+)(out)</text>
        <dbReference type="Rhea" id="RHEA:29091"/>
        <dbReference type="Rhea" id="RHEA-COMP:9565"/>
        <dbReference type="Rhea" id="RHEA-COMP:9566"/>
        <dbReference type="ChEBI" id="CHEBI:15378"/>
        <dbReference type="ChEBI" id="CHEBI:16389"/>
        <dbReference type="ChEBI" id="CHEBI:17976"/>
        <dbReference type="ChEBI" id="CHEBI:57540"/>
        <dbReference type="ChEBI" id="CHEBI:57945"/>
        <dbReference type="EC" id="7.1.1.2"/>
    </reaction>
    <physiologicalReaction direction="left-to-right" evidence="1">
        <dbReference type="Rhea" id="RHEA:29092"/>
    </physiologicalReaction>
</comment>
<comment type="subunit">
    <text evidence="2">Core subunit of respiratory chain NADH dehydrogenase (Complex I) which is composed of 45 different subunits.</text>
</comment>
<comment type="subcellular location">
    <subcellularLocation>
        <location evidence="2">Mitochondrion inner membrane</location>
        <topology evidence="3">Multi-pass membrane protein</topology>
    </subcellularLocation>
</comment>
<comment type="similarity">
    <text evidence="4">Belongs to the complex I subunit 4L family.</text>
</comment>
<protein>
    <recommendedName>
        <fullName>NADH-ubiquinone oxidoreductase chain 4L</fullName>
        <ecNumber>7.1.1.2</ecNumber>
    </recommendedName>
    <alternativeName>
        <fullName>NADH dehydrogenase subunit 4L</fullName>
    </alternativeName>
</protein>
<geneLocation type="mitochondrion"/>
<reference key="1">
    <citation type="journal article" date="2006" name="Mol. Phylogenet. Evol.">
        <title>Pinniped phylogeny and a new hypothesis for their origin and dispersal.</title>
        <authorList>
            <person name="Arnason U."/>
            <person name="Gullberg A."/>
            <person name="Janke A."/>
            <person name="Kullberg M."/>
            <person name="Lehman N."/>
            <person name="Petrov E.A."/>
            <person name="Vainola R."/>
        </authorList>
    </citation>
    <scope>NUCLEOTIDE SEQUENCE [GENOMIC DNA]</scope>
</reference>